<dbReference type="EC" id="2.3.3.13" evidence="1"/>
<dbReference type="EMBL" id="AE014291">
    <property type="protein sequence ID" value="AAN30472.1"/>
    <property type="status" value="ALT_INIT"/>
    <property type="molecule type" value="Genomic_DNA"/>
</dbReference>
<dbReference type="EMBL" id="CP002997">
    <property type="protein sequence ID" value="AEM18888.1"/>
    <property type="molecule type" value="Genomic_DNA"/>
</dbReference>
<dbReference type="SMR" id="Q8FZC4"/>
<dbReference type="KEGG" id="bms:BR1566"/>
<dbReference type="KEGG" id="bsi:BS1330_I1560"/>
<dbReference type="PATRIC" id="fig|204722.22.peg.527"/>
<dbReference type="HOGENOM" id="CLU_004588_3_0_5"/>
<dbReference type="UniPathway" id="UPA00048">
    <property type="reaction ID" value="UER00070"/>
</dbReference>
<dbReference type="PRO" id="PR:Q8FZC4"/>
<dbReference type="Proteomes" id="UP000007104">
    <property type="component" value="Chromosome I"/>
</dbReference>
<dbReference type="GO" id="GO:0005737">
    <property type="term" value="C:cytoplasm"/>
    <property type="evidence" value="ECO:0007669"/>
    <property type="project" value="UniProtKB-SubCell"/>
</dbReference>
<dbReference type="GO" id="GO:0003852">
    <property type="term" value="F:2-isopropylmalate synthase activity"/>
    <property type="evidence" value="ECO:0007669"/>
    <property type="project" value="UniProtKB-UniRule"/>
</dbReference>
<dbReference type="GO" id="GO:0003985">
    <property type="term" value="F:acetyl-CoA C-acetyltransferase activity"/>
    <property type="evidence" value="ECO:0007669"/>
    <property type="project" value="UniProtKB-UniRule"/>
</dbReference>
<dbReference type="GO" id="GO:0000287">
    <property type="term" value="F:magnesium ion binding"/>
    <property type="evidence" value="ECO:0007669"/>
    <property type="project" value="UniProtKB-UniRule"/>
</dbReference>
<dbReference type="GO" id="GO:0009098">
    <property type="term" value="P:L-leucine biosynthetic process"/>
    <property type="evidence" value="ECO:0007669"/>
    <property type="project" value="UniProtKB-UniRule"/>
</dbReference>
<dbReference type="CDD" id="cd07942">
    <property type="entry name" value="DRE_TIM_LeuA"/>
    <property type="match status" value="1"/>
</dbReference>
<dbReference type="Gene3D" id="3.30.160.270">
    <property type="match status" value="1"/>
</dbReference>
<dbReference type="Gene3D" id="3.20.20.70">
    <property type="entry name" value="Aldolase class I"/>
    <property type="match status" value="1"/>
</dbReference>
<dbReference type="HAMAP" id="MF_00572">
    <property type="entry name" value="LeuA_type2"/>
    <property type="match status" value="1"/>
</dbReference>
<dbReference type="InterPro" id="IPR013709">
    <property type="entry name" value="2-isopropylmalate_synth_dimer"/>
</dbReference>
<dbReference type="InterPro" id="IPR002034">
    <property type="entry name" value="AIPM/Hcit_synth_CS"/>
</dbReference>
<dbReference type="InterPro" id="IPR013785">
    <property type="entry name" value="Aldolase_TIM"/>
</dbReference>
<dbReference type="InterPro" id="IPR005668">
    <property type="entry name" value="IPM_Synthase"/>
</dbReference>
<dbReference type="InterPro" id="IPR054692">
    <property type="entry name" value="LeuA-like_post-cat"/>
</dbReference>
<dbReference type="InterPro" id="IPR036230">
    <property type="entry name" value="LeuA_allosteric_dom_sf"/>
</dbReference>
<dbReference type="InterPro" id="IPR039371">
    <property type="entry name" value="LeuA_N_DRE-TIM"/>
</dbReference>
<dbReference type="InterPro" id="IPR000891">
    <property type="entry name" value="PYR_CT"/>
</dbReference>
<dbReference type="NCBIfam" id="TIGR00970">
    <property type="entry name" value="leuA_yeast"/>
    <property type="match status" value="1"/>
</dbReference>
<dbReference type="NCBIfam" id="NF002991">
    <property type="entry name" value="PRK03739.1"/>
    <property type="match status" value="1"/>
</dbReference>
<dbReference type="PANTHER" id="PTHR46911">
    <property type="match status" value="1"/>
</dbReference>
<dbReference type="PANTHER" id="PTHR46911:SF1">
    <property type="entry name" value="2-ISOPROPYLMALATE SYNTHASE"/>
    <property type="match status" value="1"/>
</dbReference>
<dbReference type="Pfam" id="PF00682">
    <property type="entry name" value="HMGL-like"/>
    <property type="match status" value="1"/>
</dbReference>
<dbReference type="Pfam" id="PF22615">
    <property type="entry name" value="IPMS_D2"/>
    <property type="match status" value="1"/>
</dbReference>
<dbReference type="Pfam" id="PF08502">
    <property type="entry name" value="LeuA_dimer"/>
    <property type="match status" value="1"/>
</dbReference>
<dbReference type="SMART" id="SM00917">
    <property type="entry name" value="LeuA_dimer"/>
    <property type="match status" value="1"/>
</dbReference>
<dbReference type="SUPFAM" id="SSF110921">
    <property type="entry name" value="2-isopropylmalate synthase LeuA, allosteric (dimerisation) domain"/>
    <property type="match status" value="1"/>
</dbReference>
<dbReference type="SUPFAM" id="SSF51569">
    <property type="entry name" value="Aldolase"/>
    <property type="match status" value="1"/>
</dbReference>
<dbReference type="SUPFAM" id="SSF89000">
    <property type="entry name" value="post-HMGL domain-like"/>
    <property type="match status" value="1"/>
</dbReference>
<dbReference type="PROSITE" id="PS00815">
    <property type="entry name" value="AIPM_HOMOCIT_SYNTH_1"/>
    <property type="match status" value="1"/>
</dbReference>
<dbReference type="PROSITE" id="PS00816">
    <property type="entry name" value="AIPM_HOMOCIT_SYNTH_2"/>
    <property type="match status" value="1"/>
</dbReference>
<dbReference type="PROSITE" id="PS50991">
    <property type="entry name" value="PYR_CT"/>
    <property type="match status" value="1"/>
</dbReference>
<organism>
    <name type="scientific">Brucella suis biovar 1 (strain 1330)</name>
    <dbReference type="NCBI Taxonomy" id="204722"/>
    <lineage>
        <taxon>Bacteria</taxon>
        <taxon>Pseudomonadati</taxon>
        <taxon>Pseudomonadota</taxon>
        <taxon>Alphaproteobacteria</taxon>
        <taxon>Hyphomicrobiales</taxon>
        <taxon>Brucellaceae</taxon>
        <taxon>Brucella/Ochrobactrum group</taxon>
        <taxon>Brucella</taxon>
    </lineage>
</organism>
<name>LEU1_BRUSU</name>
<gene>
    <name evidence="1" type="primary">leuA</name>
    <name type="ordered locus">BR1566</name>
    <name type="ordered locus">BS1330_I1560</name>
</gene>
<comment type="function">
    <text evidence="1">Catalyzes the condensation of the acetyl group of acetyl-CoA with 3-methyl-2-oxobutanoate (2-ketoisovalerate) to form 3-carboxy-3-hydroxy-4-methylpentanoate (2-isopropylmalate).</text>
</comment>
<comment type="catalytic activity">
    <reaction evidence="1">
        <text>3-methyl-2-oxobutanoate + acetyl-CoA + H2O = (2S)-2-isopropylmalate + CoA + H(+)</text>
        <dbReference type="Rhea" id="RHEA:21524"/>
        <dbReference type="ChEBI" id="CHEBI:1178"/>
        <dbReference type="ChEBI" id="CHEBI:11851"/>
        <dbReference type="ChEBI" id="CHEBI:15377"/>
        <dbReference type="ChEBI" id="CHEBI:15378"/>
        <dbReference type="ChEBI" id="CHEBI:57287"/>
        <dbReference type="ChEBI" id="CHEBI:57288"/>
        <dbReference type="EC" id="2.3.3.13"/>
    </reaction>
</comment>
<comment type="cofactor">
    <cofactor evidence="1">
        <name>Mg(2+)</name>
        <dbReference type="ChEBI" id="CHEBI:18420"/>
    </cofactor>
</comment>
<comment type="pathway">
    <text evidence="1">Amino-acid biosynthesis; L-leucine biosynthesis; L-leucine from 3-methyl-2-oxobutanoate: step 1/4.</text>
</comment>
<comment type="subunit">
    <text evidence="1">Homodimer.</text>
</comment>
<comment type="subcellular location">
    <subcellularLocation>
        <location evidence="1">Cytoplasm</location>
    </subcellularLocation>
</comment>
<comment type="similarity">
    <text evidence="1">Belongs to the alpha-IPM synthase/homocitrate synthase family. LeuA type 2 subfamily.</text>
</comment>
<comment type="sequence caution" evidence="2">
    <conflict type="erroneous initiation">
        <sequence resource="EMBL-CDS" id="AAN30472"/>
    </conflict>
    <text>Extended N-terminus.</text>
</comment>
<proteinExistence type="inferred from homology"/>
<accession>Q8FZC4</accession>
<accession>G0KC46</accession>
<sequence>MPIAGTKYAPFPAPQLDDRTWPSKRIEKAPIWCSVDLRDGNQALIDPMGHDRKERMFRLLIDMGFPEIEIGFPSASQTDFDFCRWAIEQGDVPDDVDLQVLVQCRPELITRTFEALEGAKTPIIHFYNSTSELQRRVVFAKDVGGIKQIATDAAKMIMDMAAKAGGGYRFQYSPESFTGTELDVALEICNAVIEIVKPTPDNKLIVNLPSTVEMNTPNVYADQIEWMCRNLDNRESLIISLHPHNDRGTGIAATELGLMAGADRVEGTLFGNGERTGNVDVVTLALNMYTQGIDPGLDCTDINRMKEVYEYSNQLKIAERHPYVGELVYTAFSGSHQDAINKGMKARRSANSPVWEVPYLPIDPQDVGRSYEAIIRINSQSGKGGIAYILQADYGLNLPRNLQVEFREIIQHITDEEGKELPSKRIYEEFQKLYVTQPDARIKFVDHHTYPDPEQKGRRILTAEITDNGVTKTIEGKGTGPIDGFVDALSKYLGVKMSVVDYSEHSLQQGSDASAISYVEMVYPGGKLFGVGINDNIVSASLEAVVSAANRVIAK</sequence>
<keyword id="KW-0028">Amino-acid biosynthesis</keyword>
<keyword id="KW-0100">Branched-chain amino acid biosynthesis</keyword>
<keyword id="KW-0963">Cytoplasm</keyword>
<keyword id="KW-0432">Leucine biosynthesis</keyword>
<keyword id="KW-0460">Magnesium</keyword>
<keyword id="KW-0479">Metal-binding</keyword>
<keyword id="KW-0808">Transferase</keyword>
<feature type="chain" id="PRO_0000140429" description="2-isopropylmalate synthase">
    <location>
        <begin position="1"/>
        <end position="555"/>
    </location>
</feature>
<feature type="domain" description="Pyruvate carboxyltransferase" evidence="1">
    <location>
        <begin position="30"/>
        <end position="303"/>
    </location>
</feature>
<feature type="region of interest" description="Regulatory domain" evidence="1">
    <location>
        <begin position="437"/>
        <end position="555"/>
    </location>
</feature>
<feature type="binding site" evidence="1">
    <location>
        <position position="39"/>
    </location>
    <ligand>
        <name>Mg(2+)</name>
        <dbReference type="ChEBI" id="CHEBI:18420"/>
    </ligand>
</feature>
<feature type="binding site" evidence="1">
    <location>
        <position position="242"/>
    </location>
    <ligand>
        <name>Mg(2+)</name>
        <dbReference type="ChEBI" id="CHEBI:18420"/>
    </ligand>
</feature>
<feature type="binding site" evidence="1">
    <location>
        <position position="244"/>
    </location>
    <ligand>
        <name>Mg(2+)</name>
        <dbReference type="ChEBI" id="CHEBI:18420"/>
    </ligand>
</feature>
<feature type="binding site" evidence="1">
    <location>
        <position position="278"/>
    </location>
    <ligand>
        <name>Mg(2+)</name>
        <dbReference type="ChEBI" id="CHEBI:18420"/>
    </ligand>
</feature>
<evidence type="ECO:0000255" key="1">
    <source>
        <dbReference type="HAMAP-Rule" id="MF_00572"/>
    </source>
</evidence>
<evidence type="ECO:0000305" key="2"/>
<protein>
    <recommendedName>
        <fullName evidence="1">2-isopropylmalate synthase</fullName>
        <ecNumber evidence="1">2.3.3.13</ecNumber>
    </recommendedName>
    <alternativeName>
        <fullName evidence="1">Alpha-IPM synthase</fullName>
    </alternativeName>
    <alternativeName>
        <fullName evidence="1">Alpha-isopropylmalate synthase</fullName>
    </alternativeName>
</protein>
<reference key="1">
    <citation type="journal article" date="2002" name="Proc. Natl. Acad. Sci. U.S.A.">
        <title>The Brucella suis genome reveals fundamental similarities between animal and plant pathogens and symbionts.</title>
        <authorList>
            <person name="Paulsen I.T."/>
            <person name="Seshadri R."/>
            <person name="Nelson K.E."/>
            <person name="Eisen J.A."/>
            <person name="Heidelberg J.F."/>
            <person name="Read T.D."/>
            <person name="Dodson R.J."/>
            <person name="Umayam L.A."/>
            <person name="Brinkac L.M."/>
            <person name="Beanan M.J."/>
            <person name="Daugherty S.C."/>
            <person name="DeBoy R.T."/>
            <person name="Durkin A.S."/>
            <person name="Kolonay J.F."/>
            <person name="Madupu R."/>
            <person name="Nelson W.C."/>
            <person name="Ayodeji B."/>
            <person name="Kraul M."/>
            <person name="Shetty J."/>
            <person name="Malek J.A."/>
            <person name="Van Aken S.E."/>
            <person name="Riedmuller S."/>
            <person name="Tettelin H."/>
            <person name="Gill S.R."/>
            <person name="White O."/>
            <person name="Salzberg S.L."/>
            <person name="Hoover D.L."/>
            <person name="Lindler L.E."/>
            <person name="Halling S.M."/>
            <person name="Boyle S.M."/>
            <person name="Fraser C.M."/>
        </authorList>
    </citation>
    <scope>NUCLEOTIDE SEQUENCE [LARGE SCALE GENOMIC DNA]</scope>
    <source>
        <strain>1330</strain>
    </source>
</reference>
<reference key="2">
    <citation type="journal article" date="2011" name="J. Bacteriol.">
        <title>Revised genome sequence of Brucella suis 1330.</title>
        <authorList>
            <person name="Tae H."/>
            <person name="Shallom S."/>
            <person name="Settlage R."/>
            <person name="Preston D."/>
            <person name="Adams L.G."/>
            <person name="Garner H.R."/>
        </authorList>
    </citation>
    <scope>NUCLEOTIDE SEQUENCE [LARGE SCALE GENOMIC DNA]</scope>
    <source>
        <strain>1330</strain>
    </source>
</reference>